<protein>
    <recommendedName>
        <fullName evidence="4">Protein PHOSPHATE STARVATION RESPONSE 3</fullName>
        <shortName evidence="4">OsPHR3</shortName>
    </recommendedName>
</protein>
<evidence type="ECO:0000255" key="1">
    <source>
        <dbReference type="PROSITE-ProRule" id="PRU00625"/>
    </source>
</evidence>
<evidence type="ECO:0000256" key="2">
    <source>
        <dbReference type="SAM" id="MobiDB-lite"/>
    </source>
</evidence>
<evidence type="ECO:0000269" key="3">
    <source>
    </source>
</evidence>
<evidence type="ECO:0000303" key="4">
    <source>
    </source>
</evidence>
<evidence type="ECO:0000305" key="5"/>
<evidence type="ECO:0000312" key="6">
    <source>
        <dbReference type="EMBL" id="BAD10540.1"/>
    </source>
</evidence>
<evidence type="ECO:0000312" key="7">
    <source>
        <dbReference type="EMBL" id="BAF07755.1"/>
    </source>
</evidence>
<evidence type="ECO:0000312" key="8">
    <source>
        <dbReference type="EMBL" id="EAZ21684.1"/>
    </source>
</evidence>
<keyword id="KW-0238">DNA-binding</keyword>
<keyword id="KW-0539">Nucleus</keyword>
<keyword id="KW-1185">Reference proteome</keyword>
<keyword id="KW-0804">Transcription</keyword>
<keyword id="KW-0805">Transcription regulation</keyword>
<comment type="function">
    <text evidence="3">Transcription factor involved in phosphate starvation signaling (PubMed:26082401). Binds to P1BS, an imperfect palindromic sequence 5'-GNATATNC-3', to promote the expression of inorganic phosphate (Pi) starvation-responsive genes (PubMed:26082401). Functionally redundant with PHR1 and PHR2 in regulating Pi starvation response and Pi homeostasis (PubMed:26082401).</text>
</comment>
<comment type="subcellular location">
    <subcellularLocation>
        <location evidence="1">Nucleus</location>
    </subcellularLocation>
</comment>
<comment type="tissue specificity">
    <text evidence="3">Expressed in the root cap and in the exodermis of the root, in the root tip of lateral roots, in the mesophyll cells of the leaf, in pollen, vascular cylinder of the anther and the veins of the lemma, palea and pistils, and in the xylem and phloem regions of large vascular bundles, small vascular bundles and diffuse vascular bundles in node I (PubMed:26082401).</text>
</comment>
<comment type="developmental stage">
    <text evidence="3">Expressed throughout all stages of plant growth. Increased expression in leaves before the booting stage.</text>
</comment>
<comment type="induction">
    <text evidence="3">Up-regulated under Pi starvation conditions.</text>
</comment>
<reference key="1">
    <citation type="journal article" date="2005" name="Nature">
        <title>The map-based sequence of the rice genome.</title>
        <authorList>
            <consortium name="International rice genome sequencing project (IRGSP)"/>
        </authorList>
    </citation>
    <scope>NUCLEOTIDE SEQUENCE [LARGE SCALE GENOMIC DNA]</scope>
    <source>
        <strain>cv. Nipponbare</strain>
    </source>
</reference>
<reference key="2">
    <citation type="journal article" date="2008" name="Nucleic Acids Res.">
        <title>The rice annotation project database (RAP-DB): 2008 update.</title>
        <authorList>
            <consortium name="The rice annotation project (RAP)"/>
        </authorList>
    </citation>
    <scope>GENOME REANNOTATION</scope>
    <source>
        <strain>cv. Nipponbare</strain>
    </source>
</reference>
<reference key="3">
    <citation type="journal article" date="2013" name="Rice">
        <title>Improvement of the Oryza sativa Nipponbare reference genome using next generation sequence and optical map data.</title>
        <authorList>
            <person name="Kawahara Y."/>
            <person name="de la Bastide M."/>
            <person name="Hamilton J.P."/>
            <person name="Kanamori H."/>
            <person name="McCombie W.R."/>
            <person name="Ouyang S."/>
            <person name="Schwartz D.C."/>
            <person name="Tanaka T."/>
            <person name="Wu J."/>
            <person name="Zhou S."/>
            <person name="Childs K.L."/>
            <person name="Davidson R.M."/>
            <person name="Lin H."/>
            <person name="Quesada-Ocampo L."/>
            <person name="Vaillancourt B."/>
            <person name="Sakai H."/>
            <person name="Lee S.S."/>
            <person name="Kim J."/>
            <person name="Numa H."/>
            <person name="Itoh T."/>
            <person name="Buell C.R."/>
            <person name="Matsumoto T."/>
        </authorList>
    </citation>
    <scope>GENOME REANNOTATION</scope>
    <source>
        <strain>cv. Nipponbare</strain>
    </source>
</reference>
<reference key="4">
    <citation type="journal article" date="2005" name="PLoS Biol.">
        <title>The genomes of Oryza sativa: a history of duplications.</title>
        <authorList>
            <person name="Yu J."/>
            <person name="Wang J."/>
            <person name="Lin W."/>
            <person name="Li S."/>
            <person name="Li H."/>
            <person name="Zhou J."/>
            <person name="Ni P."/>
            <person name="Dong W."/>
            <person name="Hu S."/>
            <person name="Zeng C."/>
            <person name="Zhang J."/>
            <person name="Zhang Y."/>
            <person name="Li R."/>
            <person name="Xu Z."/>
            <person name="Li S."/>
            <person name="Li X."/>
            <person name="Zheng H."/>
            <person name="Cong L."/>
            <person name="Lin L."/>
            <person name="Yin J."/>
            <person name="Geng J."/>
            <person name="Li G."/>
            <person name="Shi J."/>
            <person name="Liu J."/>
            <person name="Lv H."/>
            <person name="Li J."/>
            <person name="Wang J."/>
            <person name="Deng Y."/>
            <person name="Ran L."/>
            <person name="Shi X."/>
            <person name="Wang X."/>
            <person name="Wu Q."/>
            <person name="Li C."/>
            <person name="Ren X."/>
            <person name="Wang J."/>
            <person name="Wang X."/>
            <person name="Li D."/>
            <person name="Liu D."/>
            <person name="Zhang X."/>
            <person name="Ji Z."/>
            <person name="Zhao W."/>
            <person name="Sun Y."/>
            <person name="Zhang Z."/>
            <person name="Bao J."/>
            <person name="Han Y."/>
            <person name="Dong L."/>
            <person name="Ji J."/>
            <person name="Chen P."/>
            <person name="Wu S."/>
            <person name="Liu J."/>
            <person name="Xiao Y."/>
            <person name="Bu D."/>
            <person name="Tan J."/>
            <person name="Yang L."/>
            <person name="Ye C."/>
            <person name="Zhang J."/>
            <person name="Xu J."/>
            <person name="Zhou Y."/>
            <person name="Yu Y."/>
            <person name="Zhang B."/>
            <person name="Zhuang S."/>
            <person name="Wei H."/>
            <person name="Liu B."/>
            <person name="Lei M."/>
            <person name="Yu H."/>
            <person name="Li Y."/>
            <person name="Xu H."/>
            <person name="Wei S."/>
            <person name="He X."/>
            <person name="Fang L."/>
            <person name="Zhang Z."/>
            <person name="Zhang Y."/>
            <person name="Huang X."/>
            <person name="Su Z."/>
            <person name="Tong W."/>
            <person name="Li J."/>
            <person name="Tong Z."/>
            <person name="Li S."/>
            <person name="Ye J."/>
            <person name="Wang L."/>
            <person name="Fang L."/>
            <person name="Lei T."/>
            <person name="Chen C.-S."/>
            <person name="Chen H.-C."/>
            <person name="Xu Z."/>
            <person name="Li H."/>
            <person name="Huang H."/>
            <person name="Zhang F."/>
            <person name="Xu H."/>
            <person name="Li N."/>
            <person name="Zhao C."/>
            <person name="Li S."/>
            <person name="Dong L."/>
            <person name="Huang Y."/>
            <person name="Li L."/>
            <person name="Xi Y."/>
            <person name="Qi Q."/>
            <person name="Li W."/>
            <person name="Zhang B."/>
            <person name="Hu W."/>
            <person name="Zhang Y."/>
            <person name="Tian X."/>
            <person name="Jiao Y."/>
            <person name="Liang X."/>
            <person name="Jin J."/>
            <person name="Gao L."/>
            <person name="Zheng W."/>
            <person name="Hao B."/>
            <person name="Liu S.-M."/>
            <person name="Wang W."/>
            <person name="Yuan L."/>
            <person name="Cao M."/>
            <person name="McDermott J."/>
            <person name="Samudrala R."/>
            <person name="Wang J."/>
            <person name="Wong G.K.-S."/>
            <person name="Yang H."/>
        </authorList>
    </citation>
    <scope>NUCLEOTIDE SEQUENCE [LARGE SCALE GENOMIC DNA]</scope>
    <source>
        <strain>cv. Nipponbare</strain>
    </source>
</reference>
<reference key="5">
    <citation type="journal article" date="2003" name="Science">
        <title>Collection, mapping, and annotation of over 28,000 cDNA clones from japonica rice.</title>
        <authorList>
            <consortium name="The rice full-length cDNA consortium"/>
        </authorList>
    </citation>
    <scope>NUCLEOTIDE SEQUENCE [LARGE SCALE MRNA]</scope>
    <source>
        <strain>cv. Nipponbare</strain>
    </source>
</reference>
<reference key="6">
    <citation type="journal article" date="2015" name="Plant Physiol.">
        <title>Integrative Comparison of the Role of the PHOSPHATE RESPONSE1 Subfamily in Phosphate Signaling and Homeostasis in Rice.</title>
        <authorList>
            <person name="Guo M."/>
            <person name="Ruan W."/>
            <person name="Li C."/>
            <person name="Huang F."/>
            <person name="Zeng M."/>
            <person name="Liu Y."/>
            <person name="Yu Y."/>
            <person name="Ding X."/>
            <person name="Wu Y."/>
            <person name="Wu Z."/>
            <person name="Mao C."/>
            <person name="Yi K."/>
            <person name="Wu P."/>
            <person name="Mo X."/>
        </authorList>
    </citation>
    <scope>FUNCTION</scope>
    <scope>GENE FAMILY</scope>
    <scope>NOMENCLATURE</scope>
    <scope>DEVELOPMENTAL STAGE</scope>
    <scope>TISSUE SPECIFICITY</scope>
    <scope>INDUCTION BY PHOSPHATE</scope>
</reference>
<gene>
    <name evidence="4" type="primary">PHR3</name>
    <name evidence="7" type="ordered locus">Os02g0139000</name>
    <name evidence="5" type="ordered locus">LOC_Os02g04640</name>
    <name evidence="8" type="ORF">OsJ_05314</name>
    <name evidence="6" type="ORF">OSJNBa0026E05.31</name>
</gene>
<dbReference type="EMBL" id="AP005647">
    <property type="protein sequence ID" value="BAD10540.1"/>
    <property type="molecule type" value="Genomic_DNA"/>
</dbReference>
<dbReference type="EMBL" id="AP008208">
    <property type="protein sequence ID" value="BAF07755.1"/>
    <property type="molecule type" value="Genomic_DNA"/>
</dbReference>
<dbReference type="EMBL" id="AP014958">
    <property type="protein sequence ID" value="BAS76898.1"/>
    <property type="molecule type" value="Genomic_DNA"/>
</dbReference>
<dbReference type="EMBL" id="CM000139">
    <property type="protein sequence ID" value="EAZ21684.1"/>
    <property type="molecule type" value="Genomic_DNA"/>
</dbReference>
<dbReference type="EMBL" id="AK065704">
    <property type="protein sequence ID" value="BAG89629.1"/>
    <property type="molecule type" value="mRNA"/>
</dbReference>
<dbReference type="RefSeq" id="XP_015627390.1">
    <property type="nucleotide sequence ID" value="XM_015771904.1"/>
</dbReference>
<dbReference type="RefSeq" id="XP_015627391.1">
    <property type="nucleotide sequence ID" value="XM_015771905.1"/>
</dbReference>
<dbReference type="SMR" id="Q6YXZ4"/>
<dbReference type="FunCoup" id="Q6YXZ4">
    <property type="interactions" value="202"/>
</dbReference>
<dbReference type="STRING" id="39947.Q6YXZ4"/>
<dbReference type="PaxDb" id="39947-Q6YXZ4"/>
<dbReference type="EnsemblPlants" id="Os02t0139000-01">
    <property type="protein sequence ID" value="Os02t0139000-01"/>
    <property type="gene ID" value="Os02g0139000"/>
</dbReference>
<dbReference type="Gramene" id="Os02t0139000-01">
    <property type="protein sequence ID" value="Os02t0139000-01"/>
    <property type="gene ID" value="Os02g0139000"/>
</dbReference>
<dbReference type="KEGG" id="dosa:Os02g0139000"/>
<dbReference type="eggNOG" id="ENOG502QSXE">
    <property type="taxonomic scope" value="Eukaryota"/>
</dbReference>
<dbReference type="HOGENOM" id="CLU_045049_1_0_1"/>
<dbReference type="InParanoid" id="Q6YXZ4"/>
<dbReference type="OMA" id="KMAHTCT"/>
<dbReference type="OrthoDB" id="551907at2759"/>
<dbReference type="Proteomes" id="UP000000763">
    <property type="component" value="Chromosome 2"/>
</dbReference>
<dbReference type="Proteomes" id="UP000007752">
    <property type="component" value="Chromosome 2"/>
</dbReference>
<dbReference type="Proteomes" id="UP000059680">
    <property type="component" value="Chromosome 2"/>
</dbReference>
<dbReference type="GO" id="GO:0005634">
    <property type="term" value="C:nucleus"/>
    <property type="evidence" value="ECO:0007669"/>
    <property type="project" value="UniProtKB-SubCell"/>
</dbReference>
<dbReference type="GO" id="GO:0003677">
    <property type="term" value="F:DNA binding"/>
    <property type="evidence" value="ECO:0007669"/>
    <property type="project" value="UniProtKB-KW"/>
</dbReference>
<dbReference type="GO" id="GO:0003700">
    <property type="term" value="F:DNA-binding transcription factor activity"/>
    <property type="evidence" value="ECO:0007669"/>
    <property type="project" value="InterPro"/>
</dbReference>
<dbReference type="FunFam" id="1.10.10.60:FF:000002">
    <property type="entry name" value="Myb family transcription factor"/>
    <property type="match status" value="1"/>
</dbReference>
<dbReference type="Gene3D" id="1.10.10.60">
    <property type="entry name" value="Homeodomain-like"/>
    <property type="match status" value="1"/>
</dbReference>
<dbReference type="InterPro" id="IPR009057">
    <property type="entry name" value="Homeodomain-like_sf"/>
</dbReference>
<dbReference type="InterPro" id="IPR025756">
    <property type="entry name" value="Myb_CC_LHEQLE"/>
</dbReference>
<dbReference type="InterPro" id="IPR017930">
    <property type="entry name" value="Myb_dom"/>
</dbReference>
<dbReference type="InterPro" id="IPR006447">
    <property type="entry name" value="Myb_dom_plants"/>
</dbReference>
<dbReference type="InterPro" id="IPR046955">
    <property type="entry name" value="PHR1-like"/>
</dbReference>
<dbReference type="InterPro" id="IPR001005">
    <property type="entry name" value="SANT/Myb"/>
</dbReference>
<dbReference type="NCBIfam" id="TIGR01557">
    <property type="entry name" value="myb_SHAQKYF"/>
    <property type="match status" value="1"/>
</dbReference>
<dbReference type="PANTHER" id="PTHR31499:SF79">
    <property type="entry name" value="HTH MYB-TYPE DOMAIN-CONTAINING PROTEIN"/>
    <property type="match status" value="1"/>
</dbReference>
<dbReference type="PANTHER" id="PTHR31499">
    <property type="entry name" value="MYB FAMILY TRANSCRIPTION FACTOR PHL11"/>
    <property type="match status" value="1"/>
</dbReference>
<dbReference type="Pfam" id="PF14379">
    <property type="entry name" value="Myb_CC_LHEQLE"/>
    <property type="match status" value="1"/>
</dbReference>
<dbReference type="Pfam" id="PF00249">
    <property type="entry name" value="Myb_DNA-binding"/>
    <property type="match status" value="1"/>
</dbReference>
<dbReference type="SUPFAM" id="SSF46689">
    <property type="entry name" value="Homeodomain-like"/>
    <property type="match status" value="1"/>
</dbReference>
<dbReference type="PROSITE" id="PS51294">
    <property type="entry name" value="HTH_MYB"/>
    <property type="match status" value="1"/>
</dbReference>
<feature type="chain" id="PRO_0000436716" description="Protein PHOSPHATE STARVATION RESPONSE 3">
    <location>
        <begin position="1"/>
        <end position="467"/>
    </location>
</feature>
<feature type="domain" description="HTH myb-type" evidence="1">
    <location>
        <begin position="262"/>
        <end position="322"/>
    </location>
</feature>
<feature type="DNA-binding region" description="H-T-H motif" evidence="1">
    <location>
        <begin position="293"/>
        <end position="318"/>
    </location>
</feature>
<feature type="region of interest" description="Disordered" evidence="2">
    <location>
        <begin position="227"/>
        <end position="266"/>
    </location>
</feature>
<feature type="region of interest" description="Disordered" evidence="2">
    <location>
        <begin position="327"/>
        <end position="353"/>
    </location>
</feature>
<feature type="region of interest" description="Disordered" evidence="2">
    <location>
        <begin position="400"/>
        <end position="467"/>
    </location>
</feature>
<feature type="compositionally biased region" description="Basic and acidic residues" evidence="2">
    <location>
        <begin position="327"/>
        <end position="337"/>
    </location>
</feature>
<feature type="compositionally biased region" description="Polar residues" evidence="2">
    <location>
        <begin position="402"/>
        <end position="412"/>
    </location>
</feature>
<feature type="compositionally biased region" description="Basic and acidic residues" evidence="2">
    <location>
        <begin position="419"/>
        <end position="428"/>
    </location>
</feature>
<feature type="compositionally biased region" description="Basic and acidic residues" evidence="2">
    <location>
        <begin position="438"/>
        <end position="467"/>
    </location>
</feature>
<organism evidence="6">
    <name type="scientific">Oryza sativa subsp. japonica</name>
    <name type="common">Rice</name>
    <dbReference type="NCBI Taxonomy" id="39947"/>
    <lineage>
        <taxon>Eukaryota</taxon>
        <taxon>Viridiplantae</taxon>
        <taxon>Streptophyta</taxon>
        <taxon>Embryophyta</taxon>
        <taxon>Tracheophyta</taxon>
        <taxon>Spermatophyta</taxon>
        <taxon>Magnoliopsida</taxon>
        <taxon>Liliopsida</taxon>
        <taxon>Poales</taxon>
        <taxon>Poaceae</taxon>
        <taxon>BOP clade</taxon>
        <taxon>Oryzoideae</taxon>
        <taxon>Oryzeae</taxon>
        <taxon>Oryzinae</taxon>
        <taxon>Oryza</taxon>
        <taxon>Oryza sativa</taxon>
    </lineage>
</organism>
<sequence length="467" mass="51875">MSTQSVIAVKQFSGPDKIAQAYTVPQPSAHVLSNANYDYDLCGSTNSTSLSCAIQSSNIKTESISSSSLPKILPFSTDSNGESSLSRMSQAEFSDPILSSSSTFCTSLYTSSPMNSGSCRKTGYLPFLPQPPKCEQQQNSAGQSSSSLMLLDADLRNSGHADDEHTDDLKDFLNLSSDCSFHGKCSAMAYNEQMEFQFLSEQLGIAISNNEESPRLDDIYDRPPQLMSLPVSSCSDQEDLQDARSPAKVQLSSSRSSSGTASCNKPRLRWTPELHERFVDAVNKLEGPEKATPKGVLKLMKVEGLTIYHIKSHLQKYRLAKYLPETKEDKKQEEKKTKSVANGNDHAKKKSAQMAEALRMQMEVQKQLHEQLEVQRQLQLRIEEHARYLQKILEEQQKARESISSMTSTTEGESPEFAPMEKTEDKAETSSAPLSKCRITDTDAECHSKVDNKKTKPQADLEMVHDE</sequence>
<proteinExistence type="evidence at transcript level"/>
<accession>Q6YXZ4</accession>
<name>PHR3_ORYSJ</name>